<reference key="1">
    <citation type="journal article" date="2007" name="PLoS Genet.">
        <title>Patterns and implications of gene gain and loss in the evolution of Prochlorococcus.</title>
        <authorList>
            <person name="Kettler G.C."/>
            <person name="Martiny A.C."/>
            <person name="Huang K."/>
            <person name="Zucker J."/>
            <person name="Coleman M.L."/>
            <person name="Rodrigue S."/>
            <person name="Chen F."/>
            <person name="Lapidus A."/>
            <person name="Ferriera S."/>
            <person name="Johnson J."/>
            <person name="Steglich C."/>
            <person name="Church G.M."/>
            <person name="Richardson P."/>
            <person name="Chisholm S.W."/>
        </authorList>
    </citation>
    <scope>NUCLEOTIDE SEQUENCE [LARGE SCALE GENOMIC DNA]</scope>
    <source>
        <strain>AS9601</strain>
    </source>
</reference>
<accession>A2BPV2</accession>
<sequence length="356" mass="38678">MHKVLAIETSCDETSVSIVSNIGDTFRIHSNIIASQIEDHSKWGGVVPELAARKHLELLPFVLDKALEEAKIKIEEVDYIASTVAPGLVGCLRVGSITARSLCMLHSKPFLGIHHLEGHLSSILFSENYPKKSFLTLLVSGGHTELIKVDDSRGMQRLGKSFDDAAGEAFDKVGRLLGLSYPGGPAIEKIAKNGDPMKFNLPKCKISDKKGGFLKYDFSFSGLKTAVLRLVERINLTGKTVPIPDIAASFERVVAEVLVDRTIKCAQDHSLDTVVVVGGVAANNTLRKMMISEASKKSIKVHLAPLDLCTDNAAMIGAAALFRIKFKDHFSSLKLGVAGRLSIEQADNLYEETPPF</sequence>
<name>TSAD_PROMS</name>
<organism>
    <name type="scientific">Prochlorococcus marinus (strain AS9601)</name>
    <dbReference type="NCBI Taxonomy" id="146891"/>
    <lineage>
        <taxon>Bacteria</taxon>
        <taxon>Bacillati</taxon>
        <taxon>Cyanobacteriota</taxon>
        <taxon>Cyanophyceae</taxon>
        <taxon>Synechococcales</taxon>
        <taxon>Prochlorococcaceae</taxon>
        <taxon>Prochlorococcus</taxon>
    </lineage>
</organism>
<gene>
    <name evidence="1" type="primary">tsaD</name>
    <name type="synonym">gcp</name>
    <name type="ordered locus">A9601_05251</name>
</gene>
<comment type="function">
    <text evidence="1">Required for the formation of a threonylcarbamoyl group on adenosine at position 37 (t(6)A37) in tRNAs that read codons beginning with adenine. Is involved in the transfer of the threonylcarbamoyl moiety of threonylcarbamoyl-AMP (TC-AMP) to the N6 group of A37, together with TsaE and TsaB. TsaD likely plays a direct catalytic role in this reaction.</text>
</comment>
<comment type="catalytic activity">
    <reaction evidence="1">
        <text>L-threonylcarbamoyladenylate + adenosine(37) in tRNA = N(6)-L-threonylcarbamoyladenosine(37) in tRNA + AMP + H(+)</text>
        <dbReference type="Rhea" id="RHEA:37059"/>
        <dbReference type="Rhea" id="RHEA-COMP:10162"/>
        <dbReference type="Rhea" id="RHEA-COMP:10163"/>
        <dbReference type="ChEBI" id="CHEBI:15378"/>
        <dbReference type="ChEBI" id="CHEBI:73682"/>
        <dbReference type="ChEBI" id="CHEBI:74411"/>
        <dbReference type="ChEBI" id="CHEBI:74418"/>
        <dbReference type="ChEBI" id="CHEBI:456215"/>
        <dbReference type="EC" id="2.3.1.234"/>
    </reaction>
</comment>
<comment type="cofactor">
    <cofactor evidence="1">
        <name>Fe(2+)</name>
        <dbReference type="ChEBI" id="CHEBI:29033"/>
    </cofactor>
    <text evidence="1">Binds 1 Fe(2+) ion per subunit.</text>
</comment>
<comment type="subcellular location">
    <subcellularLocation>
        <location evidence="1">Cytoplasm</location>
    </subcellularLocation>
</comment>
<comment type="similarity">
    <text evidence="1">Belongs to the KAE1 / TsaD family.</text>
</comment>
<feature type="chain" id="PRO_0000303478" description="tRNA N6-adenosine threonylcarbamoyltransferase">
    <location>
        <begin position="1"/>
        <end position="356"/>
    </location>
</feature>
<feature type="binding site" evidence="1">
    <location>
        <position position="115"/>
    </location>
    <ligand>
        <name>Fe cation</name>
        <dbReference type="ChEBI" id="CHEBI:24875"/>
    </ligand>
</feature>
<feature type="binding site" evidence="1">
    <location>
        <position position="119"/>
    </location>
    <ligand>
        <name>Fe cation</name>
        <dbReference type="ChEBI" id="CHEBI:24875"/>
    </ligand>
</feature>
<feature type="binding site" evidence="1">
    <location>
        <begin position="138"/>
        <end position="142"/>
    </location>
    <ligand>
        <name>substrate</name>
    </ligand>
</feature>
<feature type="binding site" evidence="1">
    <location>
        <position position="171"/>
    </location>
    <ligand>
        <name>substrate</name>
    </ligand>
</feature>
<feature type="binding site" evidence="1">
    <location>
        <position position="184"/>
    </location>
    <ligand>
        <name>substrate</name>
    </ligand>
</feature>
<feature type="binding site" evidence="1">
    <location>
        <position position="283"/>
    </location>
    <ligand>
        <name>substrate</name>
    </ligand>
</feature>
<feature type="binding site" evidence="1">
    <location>
        <position position="311"/>
    </location>
    <ligand>
        <name>Fe cation</name>
        <dbReference type="ChEBI" id="CHEBI:24875"/>
    </ligand>
</feature>
<keyword id="KW-0012">Acyltransferase</keyword>
<keyword id="KW-0963">Cytoplasm</keyword>
<keyword id="KW-0408">Iron</keyword>
<keyword id="KW-0479">Metal-binding</keyword>
<keyword id="KW-0808">Transferase</keyword>
<keyword id="KW-0819">tRNA processing</keyword>
<protein>
    <recommendedName>
        <fullName evidence="1">tRNA N6-adenosine threonylcarbamoyltransferase</fullName>
        <ecNumber evidence="1">2.3.1.234</ecNumber>
    </recommendedName>
    <alternativeName>
        <fullName evidence="1">N6-L-threonylcarbamoyladenine synthase</fullName>
        <shortName evidence="1">t(6)A synthase</shortName>
    </alternativeName>
    <alternativeName>
        <fullName evidence="1">t(6)A37 threonylcarbamoyladenosine biosynthesis protein TsaD</fullName>
    </alternativeName>
    <alternativeName>
        <fullName evidence="1">tRNA threonylcarbamoyladenosine biosynthesis protein TsaD</fullName>
    </alternativeName>
</protein>
<dbReference type="EC" id="2.3.1.234" evidence="1"/>
<dbReference type="EMBL" id="CP000551">
    <property type="protein sequence ID" value="ABM69813.1"/>
    <property type="molecule type" value="Genomic_DNA"/>
</dbReference>
<dbReference type="RefSeq" id="WP_011817980.1">
    <property type="nucleotide sequence ID" value="NC_008816.1"/>
</dbReference>
<dbReference type="SMR" id="A2BPV2"/>
<dbReference type="STRING" id="146891.A9601_05251"/>
<dbReference type="KEGG" id="pmb:A9601_05251"/>
<dbReference type="eggNOG" id="COG0533">
    <property type="taxonomic scope" value="Bacteria"/>
</dbReference>
<dbReference type="HOGENOM" id="CLU_023208_0_2_3"/>
<dbReference type="OrthoDB" id="9806197at2"/>
<dbReference type="Proteomes" id="UP000002590">
    <property type="component" value="Chromosome"/>
</dbReference>
<dbReference type="GO" id="GO:0005737">
    <property type="term" value="C:cytoplasm"/>
    <property type="evidence" value="ECO:0007669"/>
    <property type="project" value="UniProtKB-SubCell"/>
</dbReference>
<dbReference type="GO" id="GO:0005506">
    <property type="term" value="F:iron ion binding"/>
    <property type="evidence" value="ECO:0007669"/>
    <property type="project" value="UniProtKB-UniRule"/>
</dbReference>
<dbReference type="GO" id="GO:0061711">
    <property type="term" value="F:N(6)-L-threonylcarbamoyladenine synthase activity"/>
    <property type="evidence" value="ECO:0007669"/>
    <property type="project" value="UniProtKB-EC"/>
</dbReference>
<dbReference type="GO" id="GO:0002949">
    <property type="term" value="P:tRNA threonylcarbamoyladenosine modification"/>
    <property type="evidence" value="ECO:0007669"/>
    <property type="project" value="UniProtKB-UniRule"/>
</dbReference>
<dbReference type="FunFam" id="3.30.420.40:FF:000012">
    <property type="entry name" value="tRNA N6-adenosine threonylcarbamoyltransferase"/>
    <property type="match status" value="1"/>
</dbReference>
<dbReference type="FunFam" id="3.30.420.40:FF:000040">
    <property type="entry name" value="tRNA N6-adenosine threonylcarbamoyltransferase"/>
    <property type="match status" value="1"/>
</dbReference>
<dbReference type="Gene3D" id="3.30.420.40">
    <property type="match status" value="2"/>
</dbReference>
<dbReference type="HAMAP" id="MF_01445">
    <property type="entry name" value="TsaD"/>
    <property type="match status" value="1"/>
</dbReference>
<dbReference type="InterPro" id="IPR043129">
    <property type="entry name" value="ATPase_NBD"/>
</dbReference>
<dbReference type="InterPro" id="IPR000905">
    <property type="entry name" value="Gcp-like_dom"/>
</dbReference>
<dbReference type="InterPro" id="IPR017861">
    <property type="entry name" value="KAE1/TsaD"/>
</dbReference>
<dbReference type="InterPro" id="IPR022450">
    <property type="entry name" value="TsaD"/>
</dbReference>
<dbReference type="NCBIfam" id="TIGR00329">
    <property type="entry name" value="gcp_kae1"/>
    <property type="match status" value="1"/>
</dbReference>
<dbReference type="NCBIfam" id="TIGR03723">
    <property type="entry name" value="T6A_TsaD_YgjD"/>
    <property type="match status" value="1"/>
</dbReference>
<dbReference type="PANTHER" id="PTHR11735">
    <property type="entry name" value="TRNA N6-ADENOSINE THREONYLCARBAMOYLTRANSFERASE"/>
    <property type="match status" value="1"/>
</dbReference>
<dbReference type="PANTHER" id="PTHR11735:SF6">
    <property type="entry name" value="TRNA N6-ADENOSINE THREONYLCARBAMOYLTRANSFERASE, MITOCHONDRIAL"/>
    <property type="match status" value="1"/>
</dbReference>
<dbReference type="Pfam" id="PF00814">
    <property type="entry name" value="TsaD"/>
    <property type="match status" value="1"/>
</dbReference>
<dbReference type="PRINTS" id="PR00789">
    <property type="entry name" value="OSIALOPTASE"/>
</dbReference>
<dbReference type="SUPFAM" id="SSF53067">
    <property type="entry name" value="Actin-like ATPase domain"/>
    <property type="match status" value="2"/>
</dbReference>
<proteinExistence type="inferred from homology"/>
<evidence type="ECO:0000255" key="1">
    <source>
        <dbReference type="HAMAP-Rule" id="MF_01445"/>
    </source>
</evidence>